<accession>A1UJ09</accession>
<comment type="function">
    <text evidence="1">This protein binds to 23S rRNA in the presence of protein L20.</text>
</comment>
<comment type="subunit">
    <text evidence="1">Part of the 50S ribosomal subunit. Contacts protein L20.</text>
</comment>
<comment type="similarity">
    <text evidence="1">Belongs to the bacterial ribosomal protein bL21 family.</text>
</comment>
<organism>
    <name type="scientific">Mycobacterium sp. (strain KMS)</name>
    <dbReference type="NCBI Taxonomy" id="189918"/>
    <lineage>
        <taxon>Bacteria</taxon>
        <taxon>Bacillati</taxon>
        <taxon>Actinomycetota</taxon>
        <taxon>Actinomycetes</taxon>
        <taxon>Mycobacteriales</taxon>
        <taxon>Mycobacteriaceae</taxon>
        <taxon>Mycobacterium</taxon>
    </lineage>
</organism>
<name>RL21_MYCSK</name>
<keyword id="KW-0687">Ribonucleoprotein</keyword>
<keyword id="KW-0689">Ribosomal protein</keyword>
<keyword id="KW-0694">RNA-binding</keyword>
<keyword id="KW-0699">rRNA-binding</keyword>
<reference key="1">
    <citation type="submission" date="2006-12" db="EMBL/GenBank/DDBJ databases">
        <title>Complete sequence of chromosome of Mycobacterium sp. KMS.</title>
        <authorList>
            <consortium name="US DOE Joint Genome Institute"/>
            <person name="Copeland A."/>
            <person name="Lucas S."/>
            <person name="Lapidus A."/>
            <person name="Barry K."/>
            <person name="Detter J.C."/>
            <person name="Glavina del Rio T."/>
            <person name="Hammon N."/>
            <person name="Israni S."/>
            <person name="Dalin E."/>
            <person name="Tice H."/>
            <person name="Pitluck S."/>
            <person name="Kiss H."/>
            <person name="Brettin T."/>
            <person name="Bruce D."/>
            <person name="Han C."/>
            <person name="Tapia R."/>
            <person name="Gilna P."/>
            <person name="Schmutz J."/>
            <person name="Larimer F."/>
            <person name="Land M."/>
            <person name="Hauser L."/>
            <person name="Kyrpides N."/>
            <person name="Mikhailova N."/>
            <person name="Miller C.D."/>
            <person name="Richardson P."/>
        </authorList>
    </citation>
    <scope>NUCLEOTIDE SEQUENCE [LARGE SCALE GENOMIC DNA]</scope>
    <source>
        <strain>KMS</strain>
    </source>
</reference>
<proteinExistence type="inferred from homology"/>
<sequence>MASYAIVKTGGKQYKVAVGDVVKVEKLDSEPGASVSLPVALVVDGANVTSKAEDLAKVAVTGEVLEHTKGPKIRIHKFKNKTGYHKRQGHRQQLTVLKVTGIK</sequence>
<gene>
    <name evidence="1" type="primary">rplU</name>
    <name type="ordered locus">Mkms_3623</name>
</gene>
<dbReference type="EMBL" id="CP000518">
    <property type="protein sequence ID" value="ABL92817.1"/>
    <property type="molecule type" value="Genomic_DNA"/>
</dbReference>
<dbReference type="SMR" id="A1UJ09"/>
<dbReference type="STRING" id="189918.Mkms_3623"/>
<dbReference type="KEGG" id="mkm:Mkms_3623"/>
<dbReference type="HOGENOM" id="CLU_061463_3_0_11"/>
<dbReference type="OrthoDB" id="9813334at2"/>
<dbReference type="GO" id="GO:0005737">
    <property type="term" value="C:cytoplasm"/>
    <property type="evidence" value="ECO:0007669"/>
    <property type="project" value="UniProtKB-ARBA"/>
</dbReference>
<dbReference type="GO" id="GO:1990904">
    <property type="term" value="C:ribonucleoprotein complex"/>
    <property type="evidence" value="ECO:0007669"/>
    <property type="project" value="UniProtKB-KW"/>
</dbReference>
<dbReference type="GO" id="GO:0005840">
    <property type="term" value="C:ribosome"/>
    <property type="evidence" value="ECO:0007669"/>
    <property type="project" value="UniProtKB-KW"/>
</dbReference>
<dbReference type="GO" id="GO:0019843">
    <property type="term" value="F:rRNA binding"/>
    <property type="evidence" value="ECO:0007669"/>
    <property type="project" value="UniProtKB-UniRule"/>
</dbReference>
<dbReference type="GO" id="GO:0003735">
    <property type="term" value="F:structural constituent of ribosome"/>
    <property type="evidence" value="ECO:0007669"/>
    <property type="project" value="InterPro"/>
</dbReference>
<dbReference type="GO" id="GO:0006412">
    <property type="term" value="P:translation"/>
    <property type="evidence" value="ECO:0007669"/>
    <property type="project" value="UniProtKB-UniRule"/>
</dbReference>
<dbReference type="HAMAP" id="MF_01363">
    <property type="entry name" value="Ribosomal_bL21"/>
    <property type="match status" value="1"/>
</dbReference>
<dbReference type="InterPro" id="IPR028909">
    <property type="entry name" value="bL21-like"/>
</dbReference>
<dbReference type="InterPro" id="IPR036164">
    <property type="entry name" value="bL21-like_sf"/>
</dbReference>
<dbReference type="InterPro" id="IPR001787">
    <property type="entry name" value="Ribosomal_bL21"/>
</dbReference>
<dbReference type="InterPro" id="IPR018258">
    <property type="entry name" value="Ribosomal_bL21_CS"/>
</dbReference>
<dbReference type="NCBIfam" id="TIGR00061">
    <property type="entry name" value="L21"/>
    <property type="match status" value="1"/>
</dbReference>
<dbReference type="PANTHER" id="PTHR21349">
    <property type="entry name" value="50S RIBOSOMAL PROTEIN L21"/>
    <property type="match status" value="1"/>
</dbReference>
<dbReference type="PANTHER" id="PTHR21349:SF0">
    <property type="entry name" value="LARGE RIBOSOMAL SUBUNIT PROTEIN BL21M"/>
    <property type="match status" value="1"/>
</dbReference>
<dbReference type="Pfam" id="PF00829">
    <property type="entry name" value="Ribosomal_L21p"/>
    <property type="match status" value="1"/>
</dbReference>
<dbReference type="SUPFAM" id="SSF141091">
    <property type="entry name" value="L21p-like"/>
    <property type="match status" value="1"/>
</dbReference>
<dbReference type="PROSITE" id="PS01169">
    <property type="entry name" value="RIBOSOMAL_L21"/>
    <property type="match status" value="1"/>
</dbReference>
<evidence type="ECO:0000255" key="1">
    <source>
        <dbReference type="HAMAP-Rule" id="MF_01363"/>
    </source>
</evidence>
<evidence type="ECO:0000305" key="2"/>
<protein>
    <recommendedName>
        <fullName evidence="1">Large ribosomal subunit protein bL21</fullName>
    </recommendedName>
    <alternativeName>
        <fullName evidence="2">50S ribosomal protein L21</fullName>
    </alternativeName>
</protein>
<feature type="chain" id="PRO_1000067859" description="Large ribosomal subunit protein bL21">
    <location>
        <begin position="1"/>
        <end position="103"/>
    </location>
</feature>